<sequence length="20" mass="2116">IVGGTEVTPGEIPYQLSLQD</sequence>
<keyword id="KW-0177">Collagen degradation</keyword>
<keyword id="KW-0903">Direct protein sequencing</keyword>
<keyword id="KW-0378">Hydrolase</keyword>
<keyword id="KW-0645">Protease</keyword>
<keyword id="KW-0720">Serine protease</keyword>
<organism>
    <name type="scientific">Paralithodes camtschaticus</name>
    <name type="common">Red king crab</name>
    <name type="synonym">Maja camtschatica</name>
    <dbReference type="NCBI Taxonomy" id="6741"/>
    <lineage>
        <taxon>Eukaryota</taxon>
        <taxon>Metazoa</taxon>
        <taxon>Ecdysozoa</taxon>
        <taxon>Arthropoda</taxon>
        <taxon>Crustacea</taxon>
        <taxon>Multicrustacea</taxon>
        <taxon>Malacostraca</taxon>
        <taxon>Eumalacostraca</taxon>
        <taxon>Eucarida</taxon>
        <taxon>Decapoda</taxon>
        <taxon>Pleocyemata</taxon>
        <taxon>Anomura</taxon>
        <taxon>Paguroidea</taxon>
        <taxon>Lithodidae</taxon>
        <taxon>Paralithodes</taxon>
    </lineage>
</organism>
<comment type="function">
    <text>This enzyme is a serine protease capable of degrading the native triple helix of collagen.</text>
</comment>
<comment type="catalytic activity">
    <reaction>
        <text>Hydrolysis of proteins, with broad specificity for peptide bonds. Native collagen is cleaved about 75% of the length of the molecule from the N-terminus. Low activity on small molecule substrates of both trypsin and chymotrypsin.</text>
        <dbReference type="EC" id="3.4.21.32"/>
    </reaction>
</comment>
<comment type="similarity">
    <text evidence="1">Belongs to the peptidase S1 family.</text>
</comment>
<reference key="1">
    <citation type="journal article" date="1990" name="Biochem. Biophys. Res. Commun.">
        <title>The isolation and properties of collagenolytic proteases from crab hepatopancreas.</title>
        <authorList>
            <person name="Klimova O.A."/>
            <person name="Borukhov S.I."/>
            <person name="Solovyeva N.I."/>
            <person name="Balaevskaya T.O."/>
            <person name="Strongin A.Y."/>
        </authorList>
    </citation>
    <scope>PROTEIN SEQUENCE</scope>
    <source>
        <tissue>Hepatopancreas</tissue>
    </source>
</reference>
<evidence type="ECO:0000255" key="1">
    <source>
        <dbReference type="PROSITE-ProRule" id="PRU00274"/>
    </source>
</evidence>
<evidence type="ECO:0000256" key="2">
    <source>
        <dbReference type="SAM" id="MobiDB-lite"/>
    </source>
</evidence>
<feature type="chain" id="PRO_0000088667" description="Collagenolytic protease 36 kDa A">
    <location>
        <begin position="1"/>
        <end position="20" status="greater than"/>
    </location>
</feature>
<feature type="domain" description="Peptidase S1" evidence="1">
    <location>
        <begin position="1"/>
        <end position="20" status="greater than"/>
    </location>
</feature>
<feature type="region of interest" description="Disordered" evidence="2">
    <location>
        <begin position="1"/>
        <end position="20"/>
    </location>
</feature>
<feature type="non-terminal residue">
    <location>
        <position position="20"/>
    </location>
</feature>
<name>COGA_PARCM</name>
<dbReference type="EC" id="3.4.21.32"/>
<dbReference type="PIR" id="B34817">
    <property type="entry name" value="B34817"/>
</dbReference>
<dbReference type="GO" id="GO:0008236">
    <property type="term" value="F:serine-type peptidase activity"/>
    <property type="evidence" value="ECO:0007669"/>
    <property type="project" value="UniProtKB-KW"/>
</dbReference>
<dbReference type="GO" id="GO:0030574">
    <property type="term" value="P:collagen catabolic process"/>
    <property type="evidence" value="ECO:0007669"/>
    <property type="project" value="UniProtKB-KW"/>
</dbReference>
<dbReference type="GO" id="GO:0006508">
    <property type="term" value="P:proteolysis"/>
    <property type="evidence" value="ECO:0007669"/>
    <property type="project" value="UniProtKB-KW"/>
</dbReference>
<proteinExistence type="evidence at protein level"/>
<protein>
    <recommendedName>
        <fullName>Collagenolytic protease 36 kDa A</fullName>
        <ecNumber>3.4.21.32</ecNumber>
    </recommendedName>
</protein>
<accession>P20732</accession>